<reference key="1">
    <citation type="journal article" date="2002" name="Environ. Microbiol.">
        <title>Complete genome sequence and comparative analysis of the metabolically versatile Pseudomonas putida KT2440.</title>
        <authorList>
            <person name="Nelson K.E."/>
            <person name="Weinel C."/>
            <person name="Paulsen I.T."/>
            <person name="Dodson R.J."/>
            <person name="Hilbert H."/>
            <person name="Martins dos Santos V.A.P."/>
            <person name="Fouts D.E."/>
            <person name="Gill S.R."/>
            <person name="Pop M."/>
            <person name="Holmes M."/>
            <person name="Brinkac L.M."/>
            <person name="Beanan M.J."/>
            <person name="DeBoy R.T."/>
            <person name="Daugherty S.C."/>
            <person name="Kolonay J.F."/>
            <person name="Madupu R."/>
            <person name="Nelson W.C."/>
            <person name="White O."/>
            <person name="Peterson J.D."/>
            <person name="Khouri H.M."/>
            <person name="Hance I."/>
            <person name="Chris Lee P."/>
            <person name="Holtzapple E.K."/>
            <person name="Scanlan D."/>
            <person name="Tran K."/>
            <person name="Moazzez A."/>
            <person name="Utterback T.R."/>
            <person name="Rizzo M."/>
            <person name="Lee K."/>
            <person name="Kosack D."/>
            <person name="Moestl D."/>
            <person name="Wedler H."/>
            <person name="Lauber J."/>
            <person name="Stjepandic D."/>
            <person name="Hoheisel J."/>
            <person name="Straetz M."/>
            <person name="Heim S."/>
            <person name="Kiewitz C."/>
            <person name="Eisen J.A."/>
            <person name="Timmis K.N."/>
            <person name="Duesterhoeft A."/>
            <person name="Tuemmler B."/>
            <person name="Fraser C.M."/>
        </authorList>
    </citation>
    <scope>NUCLEOTIDE SEQUENCE [LARGE SCALE GENOMIC DNA]</scope>
    <source>
        <strain>ATCC 47054 / DSM 6125 / CFBP 8728 / NCIMB 11950 / KT2440</strain>
    </source>
</reference>
<reference key="2">
    <citation type="journal article" date="2019" name="Environ. Microbiol. Rep.">
        <title>PvdRT-OpmQ and MdtABC-OpmB efflux systems are involved in pyoverdine secretion in Pseudomonas putida KT2440.</title>
        <authorList>
            <person name="Henriquez T."/>
            <person name="Stein N.V."/>
            <person name="Jung H."/>
        </authorList>
    </citation>
    <scope>FUNCTION</scope>
    <scope>INDUCTION</scope>
    <scope>DISRUPTION PHENOTYPE</scope>
    <source>
        <strain>ATCC 47054 / DSM 6125 / CFBP 8728 / NCIMB 11950 / KT2440</strain>
    </source>
</reference>
<reference key="3">
    <citation type="journal article" date="2023" name="FEBS Lett.">
        <title>The ABC transporter family efflux pump PvdRT-OpmQ of Pseudomonas putida KT2440: purification and initial characterization.</title>
        <authorList>
            <person name="Stein N.V."/>
            <person name="Eder M."/>
            <person name="Brameyer S."/>
            <person name="Schwenkert S."/>
            <person name="Jung H."/>
        </authorList>
    </citation>
    <scope>FUNCTION</scope>
    <scope>SUBUNIT</scope>
    <source>
        <strain>ATCC 47054 / DSM 6125 / CFBP 8728 / NCIMB 11950 / KT2440</strain>
    </source>
</reference>
<gene>
    <name evidence="5" type="primary">opmQ</name>
    <name evidence="8" type="ordered locus">PP_4211</name>
</gene>
<accession>Q88F87</accession>
<sequence length="470" mass="51200">MTLPRHLCLLPLSLSLLACSTPTPPTMGIAPPAGWQSPTASKAQALPDQRWWKAFASPELDQLIEIARNNSHDLAAAAARVRQAQARAVIAGAPLLPEVQFGLDASRQRLLRGEGNDQLDASSSERTSTSFDANLSASYEIDFWGGLRSARDSALRSLDASRLDRQTVKLTLFGSVADTYLQSLALKEQLRIAQLNLRNAQAVLSLVEARQQSGSSTQLELAQQRSLVAAQQRQLPLLEQQWQDTQVTLATLLGLPVQQLPTSTAAFADLRWPRIASGVPSELLARRPDIAAAEARLAAASANVQVARAALLPKLTLGVEFGSGASTFAQIFDSPYYTLTSGLVAPVFNRGRLRAAQQLAEAEQEELLEAYRTSILAAFADVEKALNATQGVDRQRQWQDQEVEQSRIAFQLAERRYRAGAETLLTVLDTQRSLYQAQDQQARLQLSQLQASVALYKALGGGWQADSPTR</sequence>
<name>OPMQ_PSEPK</name>
<evidence type="ECO:0000250" key="1">
    <source>
        <dbReference type="UniProtKB" id="Q9I191"/>
    </source>
</evidence>
<evidence type="ECO:0000255" key="2">
    <source>
        <dbReference type="PROSITE-ProRule" id="PRU00303"/>
    </source>
</evidence>
<evidence type="ECO:0000269" key="3">
    <source>
    </source>
</evidence>
<evidence type="ECO:0000269" key="4">
    <source>
    </source>
</evidence>
<evidence type="ECO:0000303" key="5">
    <source>
    </source>
</evidence>
<evidence type="ECO:0000305" key="6"/>
<evidence type="ECO:0000305" key="7">
    <source>
    </source>
</evidence>
<evidence type="ECO:0000312" key="8">
    <source>
        <dbReference type="EMBL" id="AAN69792.1"/>
    </source>
</evidence>
<keyword id="KW-0998">Cell outer membrane</keyword>
<keyword id="KW-0449">Lipoprotein</keyword>
<keyword id="KW-0472">Membrane</keyword>
<keyword id="KW-0564">Palmitate</keyword>
<keyword id="KW-1185">Reference proteome</keyword>
<keyword id="KW-0732">Signal</keyword>
<keyword id="KW-0812">Transmembrane</keyword>
<keyword id="KW-1134">Transmembrane beta strand</keyword>
<feature type="signal peptide" evidence="2">
    <location>
        <begin position="1"/>
        <end position="18"/>
    </location>
</feature>
<feature type="chain" id="PRO_5001442657" description="Pyoverdine export outer membrane protein OpmQ" evidence="2">
    <location>
        <begin position="19"/>
        <end position="470"/>
    </location>
</feature>
<feature type="lipid moiety-binding region" description="N-palmitoyl cysteine" evidence="2">
    <location>
        <position position="19"/>
    </location>
</feature>
<feature type="lipid moiety-binding region" description="S-diacylglycerol cysteine" evidence="2">
    <location>
        <position position="19"/>
    </location>
</feature>
<organism>
    <name type="scientific">Pseudomonas putida (strain ATCC 47054 / DSM 6125 / CFBP 8728 / NCIMB 11950 / KT2440)</name>
    <dbReference type="NCBI Taxonomy" id="160488"/>
    <lineage>
        <taxon>Bacteria</taxon>
        <taxon>Pseudomonadati</taxon>
        <taxon>Pseudomonadota</taxon>
        <taxon>Gammaproteobacteria</taxon>
        <taxon>Pseudomonadales</taxon>
        <taxon>Pseudomonadaceae</taxon>
        <taxon>Pseudomonas</taxon>
    </lineage>
</organism>
<dbReference type="EMBL" id="AE015451">
    <property type="protein sequence ID" value="AAN69792.1"/>
    <property type="molecule type" value="Genomic_DNA"/>
</dbReference>
<dbReference type="RefSeq" id="NP_746328.1">
    <property type="nucleotide sequence ID" value="NC_002947.4"/>
</dbReference>
<dbReference type="RefSeq" id="WP_010954966.1">
    <property type="nucleotide sequence ID" value="NZ_CP169744.1"/>
</dbReference>
<dbReference type="SMR" id="Q88F87"/>
<dbReference type="STRING" id="160488.PP_4211"/>
<dbReference type="PaxDb" id="160488-PP_4211"/>
<dbReference type="KEGG" id="ppu:PP_4211"/>
<dbReference type="PATRIC" id="fig|160488.4.peg.4479"/>
<dbReference type="eggNOG" id="COG1538">
    <property type="taxonomic scope" value="Bacteria"/>
</dbReference>
<dbReference type="HOGENOM" id="CLU_012817_13_1_6"/>
<dbReference type="OrthoDB" id="9770517at2"/>
<dbReference type="PhylomeDB" id="Q88F87"/>
<dbReference type="BioCyc" id="PPUT160488:G1G01-4480-MONOMER"/>
<dbReference type="Proteomes" id="UP000000556">
    <property type="component" value="Chromosome"/>
</dbReference>
<dbReference type="GO" id="GO:0009279">
    <property type="term" value="C:cell outer membrane"/>
    <property type="evidence" value="ECO:0007669"/>
    <property type="project" value="UniProtKB-SubCell"/>
</dbReference>
<dbReference type="GO" id="GO:0015562">
    <property type="term" value="F:efflux transmembrane transporter activity"/>
    <property type="evidence" value="ECO:0007669"/>
    <property type="project" value="InterPro"/>
</dbReference>
<dbReference type="Gene3D" id="1.20.1600.10">
    <property type="entry name" value="Outer membrane efflux proteins (OEP)"/>
    <property type="match status" value="1"/>
</dbReference>
<dbReference type="Gene3D" id="2.20.200.10">
    <property type="entry name" value="Outer membrane efflux proteins (OEP)"/>
    <property type="match status" value="1"/>
</dbReference>
<dbReference type="InterPro" id="IPR050737">
    <property type="entry name" value="OMF"/>
</dbReference>
<dbReference type="InterPro" id="IPR003423">
    <property type="entry name" value="OMP_efflux"/>
</dbReference>
<dbReference type="InterPro" id="IPR010131">
    <property type="entry name" value="RND_efflux_OM_lipoprot_NodT"/>
</dbReference>
<dbReference type="NCBIfam" id="TIGR01845">
    <property type="entry name" value="outer_NodT"/>
    <property type="match status" value="1"/>
</dbReference>
<dbReference type="PANTHER" id="PTHR30203:SF33">
    <property type="entry name" value="BLR4455 PROTEIN"/>
    <property type="match status" value="1"/>
</dbReference>
<dbReference type="PANTHER" id="PTHR30203">
    <property type="entry name" value="OUTER MEMBRANE CATION EFFLUX PROTEIN"/>
    <property type="match status" value="1"/>
</dbReference>
<dbReference type="Pfam" id="PF02321">
    <property type="entry name" value="OEP"/>
    <property type="match status" value="2"/>
</dbReference>
<dbReference type="SUPFAM" id="SSF56954">
    <property type="entry name" value="Outer membrane efflux proteins (OEP)"/>
    <property type="match status" value="1"/>
</dbReference>
<dbReference type="PROSITE" id="PS51257">
    <property type="entry name" value="PROKAR_LIPOPROTEIN"/>
    <property type="match status" value="1"/>
</dbReference>
<comment type="function">
    <text evidence="1 3 4">Part of the tripartite efflux system PvdRT-OpmQ required for the secretion into the extracellular milieu of the siderophore pyoverdine (PVD), which is involved in iron acquisition (PubMed:30346656, PubMed:36807028). The system is responsible for export of newly synthesized PVD after the final steps of biosynthesis have taken place in the periplasm (By similarity). It is also responsible for recycling of PVD after internalization of ferri-PVD into the periplasm by the outer-membrane receptor FpvA and release of iron from PVD, thus making PVD available for new cycles of iron uptake (By similarity). Contributes to resistance against ampicillin (PubMed:30346656).</text>
</comment>
<comment type="subunit">
    <text evidence="4 7">Part of the tripartite efflux system PvdRT-OpmQ, which is composed of an inner membrane component with both ATPase and permease domains, PvdT, a periplasmic membrane fusion protein, PvdR, and an outer membrane component, OpmQ.</text>
</comment>
<comment type="subcellular location">
    <subcellularLocation>
        <location evidence="6">Cell outer membrane</location>
        <topology evidence="2">Lipid-anchor</topology>
    </subcellularLocation>
</comment>
<comment type="induction">
    <text evidence="3">Expression is stimulated by iron limitation.</text>
</comment>
<comment type="disruption phenotype">
    <text evidence="3">Deletion of pvdRT-opmQ leads to reduced amounts of PVD in the medium and decreased growth under iron limitation (PubMed:30346656). Deletion of both PvdRT-OpmQ and MdtABC-OpmB systems strongly affects growth under iron limitation as well as PVD secretion (PubMed:30346656).</text>
</comment>
<comment type="similarity">
    <text evidence="6">Belongs to the outer membrane factor (OMF) (TC 1.B.17) family.</text>
</comment>
<protein>
    <recommendedName>
        <fullName evidence="6">Pyoverdine export outer membrane protein OpmQ</fullName>
    </recommendedName>
</protein>
<proteinExistence type="evidence at protein level"/>